<dbReference type="EMBL" id="AC244157">
    <property type="status" value="NOT_ANNOTATED_CDS"/>
    <property type="molecule type" value="Genomic_DNA"/>
</dbReference>
<dbReference type="PIR" id="A01972">
    <property type="entry name" value="L2HUBH"/>
</dbReference>
<dbReference type="PIR" id="A01973">
    <property type="entry name" value="L2HUTR"/>
</dbReference>
<dbReference type="PIR" id="A01974">
    <property type="entry name" value="L2HUBR"/>
</dbReference>
<dbReference type="PIR" id="A01978">
    <property type="entry name" value="L2HUWN"/>
</dbReference>
<dbReference type="PIR" id="A01979">
    <property type="entry name" value="L2HU58"/>
</dbReference>
<dbReference type="EMDB" id="EMD-23166"/>
<dbReference type="EMDB" id="EMD-23507"/>
<dbReference type="EMDB" id="EMD-26490"/>
<dbReference type="EMDB" id="EMD-26492"/>
<dbReference type="EMDB" id="EMD-26493"/>
<dbReference type="EMDB" id="EMD-26496"/>
<dbReference type="EMDB" id="EMD-27056"/>
<dbReference type="EMDB" id="EMD-27943"/>
<dbReference type="EMDB" id="EMD-27947"/>
<dbReference type="EMDB" id="EMD-27948"/>
<dbReference type="EMDB" id="EMD-27949"/>
<dbReference type="EMDB" id="EMD-27950"/>
<dbReference type="EMDB" id="EMD-27951"/>
<dbReference type="EMDB" id="EMD-30278"/>
<dbReference type="EMDB" id="EMD-30279"/>
<dbReference type="EMDB" id="EMD-31638"/>
<dbReference type="EMDB" id="EMD-31678"/>
<dbReference type="EMDB" id="EMD-31679"/>
<dbReference type="EMDB" id="EMD-31680"/>
<dbReference type="EMDB" id="EMD-33742"/>
<dbReference type="EMDB" id="EMD-33745"/>
<dbReference type="EMDB" id="EMD-34181"/>
<dbReference type="EMDB" id="EMD-38883"/>
<dbReference type="EMDB" id="EMD-38886"/>
<dbReference type="EMDB" id="EMD-41469"/>
<dbReference type="EMDB" id="EMD-43813"/>
<dbReference type="EMDB" id="EMD-9573"/>
<dbReference type="EMDB" id="EMD-9574"/>
<dbReference type="EMDB" id="EMD-9575"/>
<dbReference type="SMR" id="P01706"/>
<dbReference type="FunCoup" id="P01706">
    <property type="interactions" value="393"/>
</dbReference>
<dbReference type="IMGT_GENE-DB" id="IGLV2-11"/>
<dbReference type="BioMuta" id="IGLV2-11"/>
<dbReference type="DMDM" id="126556"/>
<dbReference type="jPOST" id="P01706"/>
<dbReference type="MassIVE" id="P01706"/>
<dbReference type="TopDownProteomics" id="P01706"/>
<dbReference type="Ensembl" id="ENST00000390314.2">
    <property type="protein sequence ID" value="ENSP00000374849.2"/>
    <property type="gene ID" value="ENSG00000211668.2"/>
</dbReference>
<dbReference type="AGR" id="HGNC:5887"/>
<dbReference type="GeneCards" id="IGLV2-11"/>
<dbReference type="HGNC" id="HGNC:5887">
    <property type="gene designation" value="IGLV2-11"/>
</dbReference>
<dbReference type="HPA" id="ENSG00000211668">
    <property type="expression patterns" value="Tissue enhanced (intestine, lymphoid tissue)"/>
</dbReference>
<dbReference type="neXtProt" id="NX_P01706"/>
<dbReference type="OpenTargets" id="ENSG00000211668"/>
<dbReference type="VEuPathDB" id="HostDB:ENSG00000211668"/>
<dbReference type="GeneTree" id="ENSGT00940000154179"/>
<dbReference type="InParanoid" id="P01706"/>
<dbReference type="OMA" id="YYCSSPR"/>
<dbReference type="OrthoDB" id="8908372at2759"/>
<dbReference type="PAN-GO" id="P01706">
    <property type="GO annotations" value="3 GO annotations based on evolutionary models"/>
</dbReference>
<dbReference type="PhylomeDB" id="P01706"/>
<dbReference type="PathwayCommons" id="P01706"/>
<dbReference type="Reactome" id="R-HSA-166663">
    <property type="pathway name" value="Initial triggering of complement"/>
</dbReference>
<dbReference type="Reactome" id="R-HSA-173623">
    <property type="pathway name" value="Classical antibody-mediated complement activation"/>
</dbReference>
<dbReference type="Reactome" id="R-HSA-198933">
    <property type="pathway name" value="Immunoregulatory interactions between a Lymphoid and a non-Lymphoid cell"/>
</dbReference>
<dbReference type="Reactome" id="R-HSA-202733">
    <property type="pathway name" value="Cell surface interactions at the vascular wall"/>
</dbReference>
<dbReference type="Reactome" id="R-HSA-2029481">
    <property type="pathway name" value="FCGR activation"/>
</dbReference>
<dbReference type="Reactome" id="R-HSA-2029482">
    <property type="pathway name" value="Regulation of actin dynamics for phagocytic cup formation"/>
</dbReference>
<dbReference type="Reactome" id="R-HSA-2029485">
    <property type="pathway name" value="Role of phospholipids in phagocytosis"/>
</dbReference>
<dbReference type="Reactome" id="R-HSA-2168880">
    <property type="pathway name" value="Scavenging of heme from plasma"/>
</dbReference>
<dbReference type="Reactome" id="R-HSA-2454202">
    <property type="pathway name" value="Fc epsilon receptor (FCERI) signaling"/>
</dbReference>
<dbReference type="Reactome" id="R-HSA-2730905">
    <property type="pathway name" value="Role of LAT2/NTAL/LAB on calcium mobilization"/>
</dbReference>
<dbReference type="Reactome" id="R-HSA-2871796">
    <property type="pathway name" value="FCERI mediated MAPK activation"/>
</dbReference>
<dbReference type="Reactome" id="R-HSA-2871809">
    <property type="pathway name" value="FCERI mediated Ca+2 mobilization"/>
</dbReference>
<dbReference type="Reactome" id="R-HSA-2871837">
    <property type="pathway name" value="FCERI mediated NF-kB activation"/>
</dbReference>
<dbReference type="Reactome" id="R-HSA-5690714">
    <property type="pathway name" value="CD22 mediated BCR regulation"/>
</dbReference>
<dbReference type="Reactome" id="R-HSA-9664323">
    <property type="pathway name" value="FCGR3A-mediated IL10 synthesis"/>
</dbReference>
<dbReference type="Reactome" id="R-HSA-9664422">
    <property type="pathway name" value="FCGR3A-mediated phagocytosis"/>
</dbReference>
<dbReference type="Reactome" id="R-HSA-9679191">
    <property type="pathway name" value="Potential therapeutics for SARS"/>
</dbReference>
<dbReference type="Reactome" id="R-HSA-977606">
    <property type="pathway name" value="Regulation of Complement cascade"/>
</dbReference>
<dbReference type="Reactome" id="R-HSA-983695">
    <property type="pathway name" value="Antigen activates B Cell Receptor (BCR) leading to generation of second messengers"/>
</dbReference>
<dbReference type="ChiTaRS" id="IGLV2-11">
    <property type="organism name" value="human"/>
</dbReference>
<dbReference type="Pharos" id="P01706">
    <property type="development level" value="Tdark"/>
</dbReference>
<dbReference type="PRO" id="PR:P01706"/>
<dbReference type="Proteomes" id="UP000005640">
    <property type="component" value="Chromosome 22"/>
</dbReference>
<dbReference type="RNAct" id="P01706">
    <property type="molecule type" value="protein"/>
</dbReference>
<dbReference type="Bgee" id="ENSG00000211668">
    <property type="expression patterns" value="Expressed in duodenum and 90 other cell types or tissues"/>
</dbReference>
<dbReference type="GO" id="GO:0005576">
    <property type="term" value="C:extracellular region"/>
    <property type="evidence" value="ECO:0000304"/>
    <property type="project" value="Reactome"/>
</dbReference>
<dbReference type="GO" id="GO:0019814">
    <property type="term" value="C:immunoglobulin complex"/>
    <property type="evidence" value="ECO:0000318"/>
    <property type="project" value="GO_Central"/>
</dbReference>
<dbReference type="GO" id="GO:0005886">
    <property type="term" value="C:plasma membrane"/>
    <property type="evidence" value="ECO:0000304"/>
    <property type="project" value="Reactome"/>
</dbReference>
<dbReference type="GO" id="GO:0003823">
    <property type="term" value="F:antigen binding"/>
    <property type="evidence" value="ECO:0000303"/>
    <property type="project" value="UniProtKB"/>
</dbReference>
<dbReference type="GO" id="GO:0002250">
    <property type="term" value="P:adaptive immune response"/>
    <property type="evidence" value="ECO:0007669"/>
    <property type="project" value="UniProtKB-KW"/>
</dbReference>
<dbReference type="GO" id="GO:0006955">
    <property type="term" value="P:immune response"/>
    <property type="evidence" value="ECO:0000318"/>
    <property type="project" value="GO_Central"/>
</dbReference>
<dbReference type="FunFam" id="2.60.40.10:FF:000442">
    <property type="entry name" value="Immunoglobulin lambda variable 2-8"/>
    <property type="match status" value="1"/>
</dbReference>
<dbReference type="Gene3D" id="2.60.40.10">
    <property type="entry name" value="Immunoglobulins"/>
    <property type="match status" value="1"/>
</dbReference>
<dbReference type="InterPro" id="IPR007110">
    <property type="entry name" value="Ig-like_dom"/>
</dbReference>
<dbReference type="InterPro" id="IPR036179">
    <property type="entry name" value="Ig-like_dom_sf"/>
</dbReference>
<dbReference type="InterPro" id="IPR013783">
    <property type="entry name" value="Ig-like_fold"/>
</dbReference>
<dbReference type="InterPro" id="IPR003599">
    <property type="entry name" value="Ig_sub"/>
</dbReference>
<dbReference type="InterPro" id="IPR013106">
    <property type="entry name" value="Ig_V-set"/>
</dbReference>
<dbReference type="InterPro" id="IPR050150">
    <property type="entry name" value="IgV_Light_Chain"/>
</dbReference>
<dbReference type="PANTHER" id="PTHR23267">
    <property type="entry name" value="IMMUNOGLOBULIN LIGHT CHAIN"/>
    <property type="match status" value="1"/>
</dbReference>
<dbReference type="Pfam" id="PF07686">
    <property type="entry name" value="V-set"/>
    <property type="match status" value="1"/>
</dbReference>
<dbReference type="SMART" id="SM00409">
    <property type="entry name" value="IG"/>
    <property type="match status" value="1"/>
</dbReference>
<dbReference type="SMART" id="SM00406">
    <property type="entry name" value="IGv"/>
    <property type="match status" value="1"/>
</dbReference>
<dbReference type="SUPFAM" id="SSF48726">
    <property type="entry name" value="Immunoglobulin"/>
    <property type="match status" value="1"/>
</dbReference>
<dbReference type="PROSITE" id="PS50835">
    <property type="entry name" value="IG_LIKE"/>
    <property type="match status" value="1"/>
</dbReference>
<sequence length="119" mass="12644">MAWALLLLSLLTQGTGSWAQSALTQPRSVSGSPGQSVTISCTGTSSDVGGYNYVSWYQQHPGKAPKLMIYDVSKRPSGVPDRFSGSKSGNTASLTISGLQAEDEADYYCCSYAGSYTFH</sequence>
<keyword id="KW-1064">Adaptive immunity</keyword>
<keyword id="KW-1003">Cell membrane</keyword>
<keyword id="KW-0903">Direct protein sequencing</keyword>
<keyword id="KW-1015">Disulfide bond</keyword>
<keyword id="KW-0391">Immunity</keyword>
<keyword id="KW-1280">Immunoglobulin</keyword>
<keyword id="KW-0393">Immunoglobulin domain</keyword>
<keyword id="KW-0472">Membrane</keyword>
<keyword id="KW-1267">Proteomics identification</keyword>
<keyword id="KW-0873">Pyrrolidone carboxylic acid</keyword>
<keyword id="KW-1185">Reference proteome</keyword>
<keyword id="KW-0964">Secreted</keyword>
<keyword id="KW-0732">Signal</keyword>
<accession>P01706</accession>
<accession>A0A075B6K3</accession>
<accession>P01707</accession>
<accession>P01708</accession>
<accession>P01712</accession>
<accession>P01713</accession>
<accession>P80422</accession>
<protein>
    <recommendedName>
        <fullName evidence="9 14">Immunoglobulin lambda variable 2-11</fullName>
    </recommendedName>
    <alternativeName>
        <fullName evidence="20">Ig gamma lambda chain V-II region DOT</fullName>
    </alternativeName>
    <alternativeName>
        <fullName evidence="21">Ig lambda chain V-II region BOH</fullName>
    </alternativeName>
    <alternativeName>
        <fullName evidence="17">Ig lambda chain V-II region BUR</fullName>
    </alternativeName>
    <alternativeName>
        <fullName evidence="19">Ig lambda chain V-II region NIG-58</fullName>
    </alternativeName>
    <alternativeName>
        <fullName evidence="18">Ig lambda chain V-II region TRO</fullName>
    </alternativeName>
    <alternativeName>
        <fullName evidence="16">Ig lambda chain V-II region WIN</fullName>
    </alternativeName>
</protein>
<reference key="1">
    <citation type="journal article" date="1999" name="Nature">
        <title>The DNA sequence of human chromosome 22.</title>
        <authorList>
            <person name="Dunham I."/>
            <person name="Hunt A.R."/>
            <person name="Collins J.E."/>
            <person name="Bruskiewich R."/>
            <person name="Beare D.M."/>
            <person name="Clamp M."/>
            <person name="Smink L.J."/>
            <person name="Ainscough R."/>
            <person name="Almeida J.P."/>
            <person name="Babbage A.K."/>
            <person name="Bagguley C."/>
            <person name="Bailey J."/>
            <person name="Barlow K.F."/>
            <person name="Bates K.N."/>
            <person name="Beasley O.P."/>
            <person name="Bird C.P."/>
            <person name="Blakey S.E."/>
            <person name="Bridgeman A.M."/>
            <person name="Buck D."/>
            <person name="Burgess J."/>
            <person name="Burrill W.D."/>
            <person name="Burton J."/>
            <person name="Carder C."/>
            <person name="Carter N.P."/>
            <person name="Chen Y."/>
            <person name="Clark G."/>
            <person name="Clegg S.M."/>
            <person name="Cobley V.E."/>
            <person name="Cole C.G."/>
            <person name="Collier R.E."/>
            <person name="Connor R."/>
            <person name="Conroy D."/>
            <person name="Corby N.R."/>
            <person name="Coville G.J."/>
            <person name="Cox A.V."/>
            <person name="Davis J."/>
            <person name="Dawson E."/>
            <person name="Dhami P.D."/>
            <person name="Dockree C."/>
            <person name="Dodsworth S.J."/>
            <person name="Durbin R.M."/>
            <person name="Ellington A.G."/>
            <person name="Evans K.L."/>
            <person name="Fey J.M."/>
            <person name="Fleming K."/>
            <person name="French L."/>
            <person name="Garner A.A."/>
            <person name="Gilbert J.G.R."/>
            <person name="Goward M.E."/>
            <person name="Grafham D.V."/>
            <person name="Griffiths M.N.D."/>
            <person name="Hall C."/>
            <person name="Hall R.E."/>
            <person name="Hall-Tamlyn G."/>
            <person name="Heathcott R.W."/>
            <person name="Ho S."/>
            <person name="Holmes S."/>
            <person name="Hunt S.E."/>
            <person name="Jones M.C."/>
            <person name="Kershaw J."/>
            <person name="Kimberley A.M."/>
            <person name="King A."/>
            <person name="Laird G.K."/>
            <person name="Langford C.F."/>
            <person name="Leversha M.A."/>
            <person name="Lloyd C."/>
            <person name="Lloyd D.M."/>
            <person name="Martyn I.D."/>
            <person name="Mashreghi-Mohammadi M."/>
            <person name="Matthews L.H."/>
            <person name="Mccann O.T."/>
            <person name="Mcclay J."/>
            <person name="Mclaren S."/>
            <person name="McMurray A.A."/>
            <person name="Milne S.A."/>
            <person name="Mortimore B.J."/>
            <person name="Odell C.N."/>
            <person name="Pavitt R."/>
            <person name="Pearce A.V."/>
            <person name="Pearson D."/>
            <person name="Phillimore B.J.C.T."/>
            <person name="Phillips S.H."/>
            <person name="Plumb R.W."/>
            <person name="Ramsay H."/>
            <person name="Ramsey Y."/>
            <person name="Rogers L."/>
            <person name="Ross M.T."/>
            <person name="Scott C.E."/>
            <person name="Sehra H.K."/>
            <person name="Skuce C.D."/>
            <person name="Smalley S."/>
            <person name="Smith M.L."/>
            <person name="Soderlund C."/>
            <person name="Spragon L."/>
            <person name="Steward C.A."/>
            <person name="Sulston J.E."/>
            <person name="Swann R.M."/>
            <person name="Vaudin M."/>
            <person name="Wall M."/>
            <person name="Wallis J.M."/>
            <person name="Whiteley M.N."/>
            <person name="Willey D.L."/>
            <person name="Williams L."/>
            <person name="Williams S.A."/>
            <person name="Williamson H."/>
            <person name="Wilmer T.E."/>
            <person name="Wilming L."/>
            <person name="Wright C.L."/>
            <person name="Hubbard T."/>
            <person name="Bentley D.R."/>
            <person name="Beck S."/>
            <person name="Rogers J."/>
            <person name="Shimizu N."/>
            <person name="Minoshima S."/>
            <person name="Kawasaki K."/>
            <person name="Sasaki T."/>
            <person name="Asakawa S."/>
            <person name="Kudoh J."/>
            <person name="Shintani A."/>
            <person name="Shibuya K."/>
            <person name="Yoshizaki Y."/>
            <person name="Aoki N."/>
            <person name="Mitsuyama S."/>
            <person name="Roe B.A."/>
            <person name="Chen F."/>
            <person name="Chu L."/>
            <person name="Crabtree J."/>
            <person name="Deschamps S."/>
            <person name="Do A."/>
            <person name="Do T."/>
            <person name="Dorman A."/>
            <person name="Fang F."/>
            <person name="Fu Y."/>
            <person name="Hu P."/>
            <person name="Hua A."/>
            <person name="Kenton S."/>
            <person name="Lai H."/>
            <person name="Lao H.I."/>
            <person name="Lewis J."/>
            <person name="Lewis S."/>
            <person name="Lin S.-P."/>
            <person name="Loh P."/>
            <person name="Malaj E."/>
            <person name="Nguyen T."/>
            <person name="Pan H."/>
            <person name="Phan S."/>
            <person name="Qi S."/>
            <person name="Qian Y."/>
            <person name="Ray L."/>
            <person name="Ren Q."/>
            <person name="Shaull S."/>
            <person name="Sloan D."/>
            <person name="Song L."/>
            <person name="Wang Q."/>
            <person name="Wang Y."/>
            <person name="Wang Z."/>
            <person name="White J."/>
            <person name="Willingham D."/>
            <person name="Wu H."/>
            <person name="Yao Z."/>
            <person name="Zhan M."/>
            <person name="Zhang G."/>
            <person name="Chissoe S."/>
            <person name="Murray J."/>
            <person name="Miller N."/>
            <person name="Minx P."/>
            <person name="Fulton R."/>
            <person name="Johnson D."/>
            <person name="Bemis G."/>
            <person name="Bentley D."/>
            <person name="Bradshaw H."/>
            <person name="Bourne S."/>
            <person name="Cordes M."/>
            <person name="Du Z."/>
            <person name="Fulton L."/>
            <person name="Goela D."/>
            <person name="Graves T."/>
            <person name="Hawkins J."/>
            <person name="Hinds K."/>
            <person name="Kemp K."/>
            <person name="Latreille P."/>
            <person name="Layman D."/>
            <person name="Ozersky P."/>
            <person name="Rohlfing T."/>
            <person name="Scheet P."/>
            <person name="Walker C."/>
            <person name="Wamsley A."/>
            <person name="Wohldmann P."/>
            <person name="Pepin K."/>
            <person name="Nelson J."/>
            <person name="Korf I."/>
            <person name="Bedell J.A."/>
            <person name="Hillier L.W."/>
            <person name="Mardis E."/>
            <person name="Waterston R."/>
            <person name="Wilson R."/>
            <person name="Emanuel B.S."/>
            <person name="Shaikh T."/>
            <person name="Kurahashi H."/>
            <person name="Saitta S."/>
            <person name="Budarf M.L."/>
            <person name="McDermid H.E."/>
            <person name="Johnson A."/>
            <person name="Wong A.C.C."/>
            <person name="Morrow B.E."/>
            <person name="Edelmann L."/>
            <person name="Kim U.J."/>
            <person name="Shizuya H."/>
            <person name="Simon M.I."/>
            <person name="Dumanski J.P."/>
            <person name="Peyrard M."/>
            <person name="Kedra D."/>
            <person name="Seroussi E."/>
            <person name="Fransson I."/>
            <person name="Tapia I."/>
            <person name="Bruder C.E."/>
            <person name="O'Brien K.P."/>
            <person name="Wilkinson P."/>
            <person name="Bodenteich A."/>
            <person name="Hartman K."/>
            <person name="Hu X."/>
            <person name="Khan A.S."/>
            <person name="Lane L."/>
            <person name="Tilahun Y."/>
            <person name="Wright H."/>
        </authorList>
    </citation>
    <scope>NUCLEOTIDE SEQUENCE [LARGE SCALE GENOMIC DNA] (IMGT ALLELE IGLV2-11*01)</scope>
</reference>
<reference key="2">
    <citation type="journal article" date="1975" name="J. Immunol.">
        <title>The primary structure of a human lambda II chain.</title>
        <authorList>
            <person name="Kohler H."/>
            <person name="Rudofsky S."/>
            <person name="Kluskens L."/>
        </authorList>
    </citation>
    <scope>PROTEIN SEQUENCE OF 20-119</scope>
    <scope>PYROGLUTAMATE FORMATION AT GLN-20</scope>
</reference>
<reference key="3">
    <citation type="journal article" date="1978" name="Biochim. Biophys. Acta">
        <title>Amino acid sequence of the human myeloma lambda chain Win.</title>
        <authorList>
            <person name="Chen B.L."/>
            <person name="Chiu Y.-Y.H."/>
            <person name="Humphrey R.L."/>
            <person name="Poljak R.J."/>
        </authorList>
    </citation>
    <scope>PROTEIN SEQUENCE OF 20-119</scope>
    <scope>PYROGLUTAMATE FORMATION AT GLN-20</scope>
</reference>
<reference key="4">
    <citation type="journal article" date="1979" name="Hoppe-Seyler's Z. Physiol. Chem.">
        <title>Rule of antibody structure. Primary structure of a human monoclonal IgAl-immunoglobulin (myeloma protein Tro). VI. Amino acid sequence of the L-chain, lambda-type, subgroup II.</title>
        <authorList>
            <person name="Scholz R."/>
            <person name="Yang C."/>
            <person name="Hilschmann N."/>
        </authorList>
    </citation>
    <scope>PROTEIN SEQUENCE OF 20-119</scope>
    <scope>PYROGLUTAMATE FORMATION AT GLN-20</scope>
</reference>
<reference key="5">
    <citation type="journal article" date="1979" name="J. Biol. Chem.">
        <title>Primary structure of a human IgA1 immunoglobulin. V. Amino acid sequence of a human IgA lambda light chain (Bur).</title>
        <authorList>
            <person name="Infante A.J."/>
            <person name="Putnam F.W."/>
        </authorList>
    </citation>
    <scope>PROTEIN SEQUENCE OF 20-119</scope>
    <scope>PYROGLUTAMATE FORMATION AT GLN-20</scope>
</reference>
<reference key="6">
    <citation type="journal article" date="1981" name="J. Biochem.">
        <title>Comparative studies on the structure of the light chains of human immunoglobulins. III. Amino acid sequence of a lambda type Bence Jones euglobulin.</title>
        <authorList>
            <person name="Takayasu T."/>
            <person name="Takahashi N."/>
            <person name="Shinoda T."/>
            <person name="Okuyama T."/>
            <person name="Tomioka H."/>
        </authorList>
    </citation>
    <scope>PROTEIN SEQUENCE OF 20-119</scope>
    <scope>PYROGLUTAMATE FORMATION AT GLN-20</scope>
</reference>
<reference key="7">
    <citation type="journal article" date="1995" name="Eur. J. Biochem.">
        <title>Characterization of the two unique human anti-flavin monoclonal immunoglobulins.</title>
        <authorList>
            <person name="Stoppini M."/>
            <person name="Bellotti V."/>
            <person name="Negri A."/>
            <person name="Merlini G."/>
            <person name="Garver F."/>
            <person name="Ferri G."/>
        </authorList>
    </citation>
    <scope>PROTEIN SEQUENCE OF 20-119</scope>
</reference>
<reference key="8">
    <citation type="journal article" date="2001" name="Exp. Clin. Immunogenet.">
        <title>Nomenclature of the human immunoglobulin lambda (IGL) genes.</title>
        <authorList>
            <person name="Lefranc M.P."/>
        </authorList>
    </citation>
    <scope>NOMENCLATURE</scope>
</reference>
<reference key="9">
    <citation type="book" date="2001" name="The Immunoglobulin FactsBook.">
        <title>The Immunoglobulin FactsBook.</title>
        <editorList>
            <person name="Lefranc M.P."/>
            <person name="Lefranc G."/>
        </editorList>
        <authorList>
            <person name="Lefranc M.P."/>
            <person name="Lefranc G."/>
        </authorList>
    </citation>
    <scope>NOMENCLATURE</scope>
</reference>
<reference key="10">
    <citation type="journal article" date="2007" name="Annu. Rev. Genet.">
        <title>Immunoglobulin somatic hypermutation.</title>
        <authorList>
            <person name="Teng G."/>
            <person name="Papavasiliou F.N."/>
        </authorList>
    </citation>
    <scope>REVIEW ON SOMATIC HYPERMUTATION</scope>
</reference>
<reference key="11">
    <citation type="journal article" date="2010" name="J. Allergy Clin. Immunol.">
        <title>Structure and function of immunoglobulins.</title>
        <authorList>
            <person name="Schroeder H.W. Jr."/>
            <person name="Cavacini L."/>
        </authorList>
    </citation>
    <scope>REVIEW ON IMMUNOGLOBULINS</scope>
</reference>
<reference key="12">
    <citation type="journal article" date="2012" name="Nat. Rev. Immunol.">
        <title>Molecular programming of B cell memory.</title>
        <authorList>
            <person name="McHeyzer-Williams M."/>
            <person name="Okitsu S."/>
            <person name="Wang N."/>
            <person name="McHeyzer-Williams L."/>
        </authorList>
    </citation>
    <scope>REVIEW ON FUNCTION</scope>
</reference>
<reference key="13">
    <citation type="journal article" date="2014" name="Front. Immunol.">
        <title>Immunoglobulin and T Cell Receptor Genes: IMGT((R)) and the Birth and Rise of Immunoinformatics.</title>
        <authorList>
            <person name="Lefranc M.P."/>
        </authorList>
    </citation>
    <scope>NOMENCLATURE</scope>
</reference>
<comment type="function">
    <text evidence="10 11 12 13">V region of the variable domain of immunoglobulin light chains that participates in the antigen recognition (PubMed:24600447). Immunoglobulins, also known as antibodies, are membrane-bound or secreted glycoproteins produced by B lymphocytes. In the recognition phase of humoral immunity, the membrane-bound immunoglobulins serve as receptors which, upon binding of a specific antigen, trigger the clonal expansion and differentiation of B lymphocytes into immunoglobulins-secreting plasma cells. Secreted immunoglobulins mediate the effector phase of humoral immunity, which results in the elimination of bound antigens (PubMed:20176268, PubMed:22158414). The antigen binding site is formed by the variable domain of one heavy chain, together with that of its associated light chain. Thus, each immunoglobulin has two antigen binding sites with remarkable affinity for a particular antigen. The variable domains are assembled by a process called V-(D)-J rearrangement and can then be subjected to somatic hypermutations which, after exposure to antigen and selection, allow affinity maturation for a particular antigen (PubMed:17576170, PubMed:20176268).</text>
</comment>
<comment type="subunit">
    <text evidence="11">Immunoglobulins are composed of two identical heavy chains and two identical light chains; disulfide-linked.</text>
</comment>
<comment type="subcellular location">
    <subcellularLocation>
        <location evidence="11 12">Secreted</location>
    </subcellularLocation>
    <subcellularLocation>
        <location evidence="11 12">Cell membrane</location>
    </subcellularLocation>
</comment>
<comment type="polymorphism">
    <text>There are several alleles. The sequence shown is that of IMGT allele IGLV2-11*01.</text>
</comment>
<comment type="caution">
    <text evidence="15">For an example of a full-length immunoglobulin lambda light chain see AC P0DOX8.</text>
</comment>
<proteinExistence type="evidence at protein level"/>
<gene>
    <name evidence="9 14" type="primary">IGLV2-11</name>
</gene>
<name>LV211_HUMAN</name>
<feature type="signal peptide" evidence="3 4 5 6 7 8">
    <location>
        <begin position="1"/>
        <end position="19"/>
    </location>
</feature>
<feature type="chain" id="PRO_0000059832" description="Immunoglobulin lambda variable 2-11" evidence="3 4 5 6 7 8">
    <location>
        <begin position="20"/>
        <end position="119"/>
    </location>
</feature>
<feature type="domain" description="Ig-like" evidence="2">
    <location>
        <begin position="20"/>
        <end position="119" status="greater than"/>
    </location>
</feature>
<feature type="region of interest" description="Framework-1" evidence="1">
    <location>
        <begin position="20"/>
        <end position="44"/>
    </location>
</feature>
<feature type="region of interest" description="Complementarity-determining-1" evidence="1">
    <location>
        <begin position="45"/>
        <end position="53"/>
    </location>
</feature>
<feature type="region of interest" description="Framework-2" evidence="1">
    <location>
        <begin position="54"/>
        <end position="70"/>
    </location>
</feature>
<feature type="region of interest" description="Complementarity-determining-2" evidence="1">
    <location>
        <begin position="71"/>
        <end position="73"/>
    </location>
</feature>
<feature type="region of interest" description="Framework-3" evidence="1">
    <location>
        <begin position="74"/>
        <end position="109"/>
    </location>
</feature>
<feature type="region of interest" description="Complementarity-determining-3" evidence="1">
    <location>
        <begin position="110"/>
        <end position="119" status="greater than"/>
    </location>
</feature>
<feature type="modified residue" description="Pyrrolidone carboxylic acid" evidence="3 4 5 6 8">
    <location>
        <position position="20"/>
    </location>
</feature>
<feature type="disulfide bond" evidence="2">
    <location>
        <begin position="41"/>
        <end position="109"/>
    </location>
</feature>
<feature type="sequence conflict" description="In Ref. 7; AA sequence." evidence="15" ref="7">
    <original>Q</original>
    <variation>A</variation>
    <location>
        <position position="20"/>
    </location>
</feature>
<feature type="sequence conflict" description="In Ref. 3; AA sequence." evidence="15" ref="3">
    <original>RS</original>
    <variation>PR</variation>
    <location>
        <begin position="27"/>
        <end position="28"/>
    </location>
</feature>
<feature type="sequence conflict" description="In Ref. 7; AA sequence." evidence="15" ref="7">
    <original>V</original>
    <variation>L</variation>
    <location>
        <position position="29"/>
    </location>
</feature>
<feature type="sequence conflict" description="In Ref. 5; AA sequence." evidence="15" ref="5">
    <original>Q</original>
    <variation>H</variation>
    <location>
        <position position="35"/>
    </location>
</feature>
<feature type="sequence conflict" description="In Ref. 7; AA sequence." evidence="15" ref="7">
    <original>S</original>
    <variation>A</variation>
    <location>
        <position position="36"/>
    </location>
</feature>
<feature type="sequence conflict" description="In Ref. 6; AA sequence." evidence="15" ref="6">
    <original>V</original>
    <variation>L</variation>
    <location>
        <position position="37"/>
    </location>
</feature>
<feature type="sequence conflict" description="In Ref. 6; AA sequence." evidence="15" ref="6">
    <original>TGTSS</original>
    <variation>SGAPC</variation>
    <location>
        <begin position="42"/>
        <end position="46"/>
    </location>
</feature>
<feature type="sequence conflict" description="In Ref. 2; AA sequence." evidence="15" ref="2">
    <original>T</original>
    <variation>A</variation>
    <location>
        <position position="42"/>
    </location>
</feature>
<feature type="sequence conflict" description="In Ref. 5; AA sequence." evidence="15" ref="5">
    <original>T</original>
    <variation>I</variation>
    <location>
        <position position="42"/>
    </location>
</feature>
<feature type="sequence conflict" description="In Ref. 7; AA sequence." evidence="15" ref="7">
    <original>TSSDVGGYNY</original>
    <variation>LPSVVDDDNF</variation>
    <location>
        <begin position="44"/>
        <end position="53"/>
    </location>
</feature>
<feature type="sequence conflict" description="In Ref. 3; AA sequence." evidence="15" ref="3">
    <original>TSSDVG</original>
    <variation>SYSNVT</variation>
    <location>
        <begin position="44"/>
        <end position="49"/>
    </location>
</feature>
<feature type="sequence conflict" description="In Ref. 5; AA sequence." evidence="15" ref="5">
    <original>D</original>
    <variation>N</variation>
    <location>
        <position position="47"/>
    </location>
</feature>
<feature type="sequence conflict" description="In Ref. 6; AA sequence." evidence="15" ref="6">
    <original>GGYNY</original>
    <variation>DGCES</variation>
    <location>
        <begin position="49"/>
        <end position="53"/>
    </location>
</feature>
<feature type="sequence conflict" description="In Ref. 5; AA sequence." evidence="15" ref="5">
    <original>GYN</original>
    <variation>DYK</variation>
    <location>
        <begin position="50"/>
        <end position="52"/>
    </location>
</feature>
<feature type="sequence conflict" description="In Ref. 4; AA sequence." evidence="15" ref="4">
    <original>G</original>
    <variation>A</variation>
    <location>
        <position position="50"/>
    </location>
</feature>
<feature type="sequence conflict" description="In Ref. 2; AA sequence." evidence="15" ref="2">
    <original>YNY</original>
    <variation>NHF</variation>
    <location>
        <begin position="51"/>
        <end position="53"/>
    </location>
</feature>
<feature type="sequence conflict" description="In Ref. 3; AA sequence." evidence="15" ref="3">
    <original>Y</original>
    <variation>H</variation>
    <location>
        <position position="53"/>
    </location>
</feature>
<feature type="sequence conflict" description="In Ref. 4; AA sequence." evidence="15" ref="4">
    <original>Y</original>
    <variation>S</variation>
    <location>
        <position position="53"/>
    </location>
</feature>
<feature type="sequence conflict" description="In Ref. 3; AA sequence." evidence="15" ref="3">
    <original>H</original>
    <variation>D</variation>
    <location>
        <position position="60"/>
    </location>
</feature>
<feature type="sequence conflict" description="In Ref. 7; AA sequence." evidence="15" ref="7">
    <original>H</original>
    <variation>T</variation>
    <location>
        <position position="60"/>
    </location>
</feature>
<feature type="sequence conflict" description="In Ref. 7; AA sequence." evidence="15" ref="7">
    <original>K</original>
    <variation>R</variation>
    <location>
        <position position="63"/>
    </location>
</feature>
<feature type="sequence conflict" description="In Ref. 3; AA sequence." evidence="15" ref="3">
    <original>A</original>
    <variation>V</variation>
    <location>
        <position position="64"/>
    </location>
</feature>
<feature type="sequence conflict" description="In Ref. 7; AA sequence." evidence="15" ref="7">
    <original>KLM</original>
    <variation>RLL</variation>
    <location>
        <begin position="66"/>
        <end position="68"/>
    </location>
</feature>
<feature type="sequence conflict" description="In Ref. 5; AA sequence, 6; AA sequence and 2; AA sequence." evidence="15" ref="5 6 2">
    <original>M</original>
    <variation>I</variation>
    <location>
        <position position="68"/>
    </location>
</feature>
<feature type="sequence conflict" description="In Ref. 4; AA sequence." evidence="15" ref="4">
    <original>Y</original>
    <variation>F</variation>
    <location>
        <position position="70"/>
    </location>
</feature>
<feature type="sequence conflict" description="In Ref. 6; AA sequence." evidence="15" ref="6">
    <original>DVSK</original>
    <variation>GFSN</variation>
    <location>
        <begin position="71"/>
        <end position="74"/>
    </location>
</feature>
<feature type="sequence conflict" description="In Ref. 2; AA sequence." evidence="15" ref="2">
    <original>DVS</original>
    <variation>GVN</variation>
    <location>
        <begin position="71"/>
        <end position="73"/>
    </location>
</feature>
<feature type="sequence conflict" description="In Ref. 5; AA sequence." evidence="15" ref="5">
    <original>D</original>
    <variation>E</variation>
    <location>
        <position position="71"/>
    </location>
</feature>
<feature type="sequence conflict" description="In Ref. 7; AA sequence." evidence="15" ref="7">
    <original>VSK</original>
    <variation>DSL</variation>
    <location>
        <begin position="72"/>
        <end position="74"/>
    </location>
</feature>
<feature type="sequence conflict" description="In Ref. 3; AA sequence." evidence="15" ref="3">
    <original>S</original>
    <variation>D</variation>
    <location>
        <position position="73"/>
    </location>
</feature>
<feature type="sequence conflict" description="In Ref. 4; AA sequence." evidence="15" ref="4">
    <original>S</original>
    <variation>T</variation>
    <location>
        <position position="73"/>
    </location>
</feature>
<feature type="sequence conflict" description="In Ref. 5; AA sequence." evidence="15" ref="5">
    <original>K</original>
    <variation>S</variation>
    <location>
        <position position="74"/>
    </location>
</feature>
<feature type="sequence conflict" description="In Ref. 6; AA sequence." evidence="15" ref="6">
    <original>D</original>
    <variation>L</variation>
    <location>
        <position position="81"/>
    </location>
</feature>
<feature type="sequence conflict" description="In Ref. 7; AA sequence." evidence="15" ref="7">
    <original>D</original>
    <variation>N</variation>
    <location>
        <position position="81"/>
    </location>
</feature>
<feature type="sequence conflict" description="In Ref. 2; AA sequence." evidence="15" ref="2">
    <original>D</original>
    <variation>Y</variation>
    <location>
        <position position="81"/>
    </location>
</feature>
<feature type="sequence conflict" description="In Ref. 4; AA sequence." evidence="15" ref="4">
    <original>F</original>
    <variation>L</variation>
    <location>
        <position position="83"/>
    </location>
</feature>
<feature type="sequence conflict" description="In Ref. 7; AA sequence." evidence="15" ref="7">
    <original>GNTAS</original>
    <variation>DTKAA</variation>
    <location>
        <begin position="89"/>
        <end position="93"/>
    </location>
</feature>
<feature type="sequence conflict" description="In Ref. 3; AA sequence." evidence="15" ref="3">
    <original>G</original>
    <variation>A</variation>
    <location>
        <position position="89"/>
    </location>
</feature>
<feature type="sequence conflict" description="In Ref. 4; AA sequence and 6; AA sequence." evidence="15" ref="4 6">
    <original>N</original>
    <variation>D</variation>
    <location>
        <position position="90"/>
    </location>
</feature>
<feature type="sequence conflict" description="In Ref. 6; AA sequence." evidence="15" ref="6">
    <original>T</original>
    <variation>A</variation>
    <location>
        <position position="91"/>
    </location>
</feature>
<feature type="sequence conflict" description="In Ref. 4; AA sequence." evidence="15" ref="4">
    <original>QAE</original>
    <variation>RAD</variation>
    <location>
        <begin position="100"/>
        <end position="102"/>
    </location>
</feature>
<feature type="sequence conflict" description="In Ref. 7; AA sequence." evidence="15" ref="7">
    <original>AE</original>
    <variation>PD</variation>
    <location>
        <begin position="101"/>
        <end position="102"/>
    </location>
</feature>
<feature type="sequence conflict" description="In Ref. 6; AA sequence." evidence="15" ref="6">
    <original>A</original>
    <variation>V</variation>
    <location>
        <position position="101"/>
    </location>
</feature>
<feature type="sequence conflict" description="In Ref. 3; AA sequence." evidence="15" ref="3">
    <original>ED</original>
    <variation>NN</variation>
    <location>
        <begin position="102"/>
        <end position="103"/>
    </location>
</feature>
<feature type="sequence conflict" description="In Ref. 7; AA sequence." evidence="15" ref="7">
    <original>DYY</original>
    <variation>TYF</variation>
    <location>
        <begin position="106"/>
        <end position="108"/>
    </location>
</feature>
<feature type="sequence conflict" description="In Ref. 2; AA sequence." evidence="15" ref="2">
    <original>D</original>
    <variation>H</variation>
    <location>
        <position position="106"/>
    </location>
</feature>
<feature type="sequence conflict" description="In Ref. 3; AA sequence and 6; AA sequence." evidence="15" ref="3 6">
    <original>C</original>
    <variation>S</variation>
    <location>
        <position position="110"/>
    </location>
</feature>
<feature type="sequence conflict" description="In Ref. 3; AA sequence." evidence="15" ref="3">
    <original>AGSYTFH</original>
    <variation>GGTYSLI</variation>
    <location>
        <begin position="113"/>
        <end position="119"/>
    </location>
</feature>
<feature type="sequence conflict" description="In Ref. 7; AA sequence." evidence="15" ref="7">
    <original>AGSYTFH</original>
    <variation>VGNYIFV</variation>
    <location>
        <begin position="113"/>
        <end position="119"/>
    </location>
</feature>
<feature type="sequence conflict" description="In Ref. 5; AA sequence." evidence="15" ref="5">
    <original>A</original>
    <variation>I</variation>
    <location>
        <position position="113"/>
    </location>
</feature>
<feature type="sequence conflict" description="In Ref. 6; AA sequence." evidence="15" ref="6">
    <original>GSYTFH</original>
    <variation>DSSVIF</variation>
    <location>
        <begin position="114"/>
        <end position="119"/>
    </location>
</feature>
<feature type="sequence conflict" description="In Ref. 2; AA sequence and 4; AA sequence." evidence="15" ref="2 4">
    <original>S</original>
    <variation>R</variation>
    <location>
        <position position="115"/>
    </location>
</feature>
<feature type="sequence conflict" description="In Ref. 2; AA sequence." evidence="15" ref="2">
    <original>YTFH</original>
    <variation>FTWV</variation>
    <location>
        <begin position="116"/>
        <end position="119"/>
    </location>
</feature>
<feature type="sequence conflict" description="In Ref. 4; AA sequence." evidence="15" ref="4">
    <original>TFH</original>
    <variation>SVI</variation>
    <location>
        <begin position="117"/>
        <end position="119"/>
    </location>
</feature>
<feature type="sequence conflict" description="In Ref. 5; AA sequence." evidence="15" ref="5">
    <original>TFH</original>
    <variation>VFG</variation>
    <location>
        <begin position="117"/>
        <end position="119"/>
    </location>
</feature>
<feature type="non-terminal residue">
    <location>
        <position position="119"/>
    </location>
</feature>
<evidence type="ECO:0000250" key="1">
    <source>
        <dbReference type="UniProtKB" id="P01721"/>
    </source>
</evidence>
<evidence type="ECO:0000255" key="2">
    <source>
        <dbReference type="PROSITE-ProRule" id="PRU00114"/>
    </source>
</evidence>
<evidence type="ECO:0000269" key="3">
    <source>
    </source>
</evidence>
<evidence type="ECO:0000269" key="4">
    <source>
    </source>
</evidence>
<evidence type="ECO:0000269" key="5">
    <source>
    </source>
</evidence>
<evidence type="ECO:0000269" key="6">
    <source>
    </source>
</evidence>
<evidence type="ECO:0000269" key="7">
    <source>
    </source>
</evidence>
<evidence type="ECO:0000269" key="8">
    <source>
    </source>
</evidence>
<evidence type="ECO:0000303" key="9">
    <source>
    </source>
</evidence>
<evidence type="ECO:0000303" key="10">
    <source>
    </source>
</evidence>
<evidence type="ECO:0000303" key="11">
    <source>
    </source>
</evidence>
<evidence type="ECO:0000303" key="12">
    <source>
    </source>
</evidence>
<evidence type="ECO:0000303" key="13">
    <source>
    </source>
</evidence>
<evidence type="ECO:0000303" key="14">
    <source ref="9"/>
</evidence>
<evidence type="ECO:0000305" key="15"/>
<evidence type="ECO:0000305" key="16">
    <source>
    </source>
</evidence>
<evidence type="ECO:0000305" key="17">
    <source>
    </source>
</evidence>
<evidence type="ECO:0000305" key="18">
    <source>
    </source>
</evidence>
<evidence type="ECO:0000305" key="19">
    <source>
    </source>
</evidence>
<evidence type="ECO:0000305" key="20">
    <source>
    </source>
</evidence>
<evidence type="ECO:0000305" key="21">
    <source>
    </source>
</evidence>
<organism>
    <name type="scientific">Homo sapiens</name>
    <name type="common">Human</name>
    <dbReference type="NCBI Taxonomy" id="9606"/>
    <lineage>
        <taxon>Eukaryota</taxon>
        <taxon>Metazoa</taxon>
        <taxon>Chordata</taxon>
        <taxon>Craniata</taxon>
        <taxon>Vertebrata</taxon>
        <taxon>Euteleostomi</taxon>
        <taxon>Mammalia</taxon>
        <taxon>Eutheria</taxon>
        <taxon>Euarchontoglires</taxon>
        <taxon>Primates</taxon>
        <taxon>Haplorrhini</taxon>
        <taxon>Catarrhini</taxon>
        <taxon>Hominidae</taxon>
        <taxon>Homo</taxon>
    </lineage>
</organism>